<accession>P0CN63</accession>
<accession>Q55N86</accession>
<accession>Q55N87</accession>
<accession>Q5KBL6</accession>
<accession>Q5KBL7</accession>
<accession>Q5KBL8</accession>
<gene>
    <name type="primary">EXO84</name>
    <name type="ordered locus">CNBH1990</name>
</gene>
<sequence length="675" mass="76106">MASLRRPSTAIPRGPASVQFDRGARPPLPNDNKQKRMSKVGEKIKKRLSMRYGGNESFSVPPPLPGASDFLTADPYGGLDIETPGEDLAASPFGLYGASDLKESSIQSSQPLDTQEHLVDESIGRRGAADATLEEEWNLEELSNEKVDAQAYVKKVLTGADEEEKRRFVAALMREKQANKKELQRTVFKHYAEFVAISKEISTLENDMLELKELLGQWKDLPQLMGMEDTLAPTLDRNGNLERRRTQRKSVFDLQNLYRNQLTQLWSIVEGSQKYLPVVAGRHLVFELHGVVELNPATYKPKQNVSIFLLNDVLLIAGKRRNKGGSTTSVGDEKDRDRGRMVAERCWNLIELGIVDVKDGGELVNVIKVHRGKEHCVYRTQKSDDKRALINAFRQISREANEKKRKDSEKEQERRKTMWLGDKNGNGTGNSGHPLSTIGPSMADSKDLRWIDEYGDELTMAIAIRDWEESVKLVEKGQALSKSIESNSSAHSLLVSRLEQLVPSLVSQISHDLSSSNLRKSSSARLISLLVRLDLADHARDSFLESRRELMFKRVRSIKCDGDVSIYINELAVVIFTIIRHTSDWYMNAFKENNMASGFVTWAKQQIETFADLFRRQMDAPNISESTVNECLHVTATQNRKLLRDVGLDFTFLLSSLLQPSSNPSDYPHSVFTSV</sequence>
<keyword id="KW-0175">Coiled coil</keyword>
<keyword id="KW-0968">Cytoplasmic vesicle</keyword>
<keyword id="KW-0268">Exocytosis</keyword>
<keyword id="KW-0653">Protein transport</keyword>
<keyword id="KW-0813">Transport</keyword>
<name>EXO84_CRYNB</name>
<proteinExistence type="inferred from homology"/>
<feature type="chain" id="PRO_0000410086" description="Exocyst complex component EXO84">
    <location>
        <begin position="1"/>
        <end position="675"/>
    </location>
</feature>
<feature type="region of interest" description="Disordered" evidence="3">
    <location>
        <begin position="1"/>
        <end position="40"/>
    </location>
</feature>
<feature type="region of interest" description="Disordered" evidence="3">
    <location>
        <begin position="399"/>
        <end position="439"/>
    </location>
</feature>
<feature type="coiled-coil region" evidence="2">
    <location>
        <begin position="134"/>
        <end position="221"/>
    </location>
</feature>
<feature type="compositionally biased region" description="Basic and acidic residues" evidence="3">
    <location>
        <begin position="399"/>
        <end position="416"/>
    </location>
</feature>
<reference key="1">
    <citation type="journal article" date="2005" name="Science">
        <title>The genome of the basidiomycetous yeast and human pathogen Cryptococcus neoformans.</title>
        <authorList>
            <person name="Loftus B.J."/>
            <person name="Fung E."/>
            <person name="Roncaglia P."/>
            <person name="Rowley D."/>
            <person name="Amedeo P."/>
            <person name="Bruno D."/>
            <person name="Vamathevan J."/>
            <person name="Miranda M."/>
            <person name="Anderson I.J."/>
            <person name="Fraser J.A."/>
            <person name="Allen J.E."/>
            <person name="Bosdet I.E."/>
            <person name="Brent M.R."/>
            <person name="Chiu R."/>
            <person name="Doering T.L."/>
            <person name="Donlin M.J."/>
            <person name="D'Souza C.A."/>
            <person name="Fox D.S."/>
            <person name="Grinberg V."/>
            <person name="Fu J."/>
            <person name="Fukushima M."/>
            <person name="Haas B.J."/>
            <person name="Huang J.C."/>
            <person name="Janbon G."/>
            <person name="Jones S.J.M."/>
            <person name="Koo H.L."/>
            <person name="Krzywinski M.I."/>
            <person name="Kwon-Chung K.J."/>
            <person name="Lengeler K.B."/>
            <person name="Maiti R."/>
            <person name="Marra M.A."/>
            <person name="Marra R.E."/>
            <person name="Mathewson C.A."/>
            <person name="Mitchell T.G."/>
            <person name="Pertea M."/>
            <person name="Riggs F.R."/>
            <person name="Salzberg S.L."/>
            <person name="Schein J.E."/>
            <person name="Shvartsbeyn A."/>
            <person name="Shin H."/>
            <person name="Shumway M."/>
            <person name="Specht C.A."/>
            <person name="Suh B.B."/>
            <person name="Tenney A."/>
            <person name="Utterback T.R."/>
            <person name="Wickes B.L."/>
            <person name="Wortman J.R."/>
            <person name="Wye N.H."/>
            <person name="Kronstad J.W."/>
            <person name="Lodge J.K."/>
            <person name="Heitman J."/>
            <person name="Davis R.W."/>
            <person name="Fraser C.M."/>
            <person name="Hyman R.W."/>
        </authorList>
    </citation>
    <scope>NUCLEOTIDE SEQUENCE [LARGE SCALE GENOMIC DNA]</scope>
    <source>
        <strain>B-3501A</strain>
    </source>
</reference>
<comment type="function">
    <text evidence="1">Involved in the secretory pathway as part of the exocyst complex which tethers secretory vesicles to the sites of exocytosis. Plays a role in both the assembly of the exocyst and the polarization of this complex to specific sites of the plasma membrane for exocytosis. Also involved in assembly of the spliceosome (By similarity).</text>
</comment>
<comment type="subunit">
    <text evidence="1">Component of the exocyst complex.</text>
</comment>
<comment type="subcellular location">
    <subcellularLocation>
        <location evidence="1">Cytoplasmic vesicle</location>
        <location evidence="1">Secretory vesicle</location>
    </subcellularLocation>
    <text evidence="1">Cell periphery. The polarization of EXO84 requires actin cables (By similarity).</text>
</comment>
<comment type="similarity">
    <text evidence="4">Belongs to the EXO84 family.</text>
</comment>
<comment type="sequence caution" evidence="4">
    <conflict type="erroneous gene model prediction">
        <sequence resource="EMBL-CDS" id="EAL19098"/>
    </conflict>
</comment>
<organism>
    <name type="scientific">Cryptococcus neoformans var. neoformans serotype D (strain B-3501A)</name>
    <name type="common">Filobasidiella neoformans</name>
    <dbReference type="NCBI Taxonomy" id="283643"/>
    <lineage>
        <taxon>Eukaryota</taxon>
        <taxon>Fungi</taxon>
        <taxon>Dikarya</taxon>
        <taxon>Basidiomycota</taxon>
        <taxon>Agaricomycotina</taxon>
        <taxon>Tremellomycetes</taxon>
        <taxon>Tremellales</taxon>
        <taxon>Cryptococcaceae</taxon>
        <taxon>Cryptococcus</taxon>
        <taxon>Cryptococcus neoformans species complex</taxon>
    </lineage>
</organism>
<protein>
    <recommendedName>
        <fullName>Exocyst complex component EXO84</fullName>
    </recommendedName>
</protein>
<evidence type="ECO:0000250" key="1"/>
<evidence type="ECO:0000255" key="2"/>
<evidence type="ECO:0000256" key="3">
    <source>
        <dbReference type="SAM" id="MobiDB-lite"/>
    </source>
</evidence>
<evidence type="ECO:0000305" key="4"/>
<dbReference type="EMBL" id="AAEY01000042">
    <property type="protein sequence ID" value="EAL19099.1"/>
    <property type="molecule type" value="Genomic_DNA"/>
</dbReference>
<dbReference type="EMBL" id="AAEY01000042">
    <property type="protein sequence ID" value="EAL19098.1"/>
    <property type="status" value="ALT_SEQ"/>
    <property type="molecule type" value="Genomic_DNA"/>
</dbReference>
<dbReference type="RefSeq" id="XP_773745.1">
    <property type="nucleotide sequence ID" value="XM_768652.1"/>
</dbReference>
<dbReference type="RefSeq" id="XP_773746.1">
    <property type="nucleotide sequence ID" value="XM_768653.1"/>
</dbReference>
<dbReference type="SMR" id="P0CN63"/>
<dbReference type="EnsemblFungi" id="AAW45670">
    <property type="protein sequence ID" value="AAW45670"/>
    <property type="gene ID" value="CNI02110"/>
</dbReference>
<dbReference type="GeneID" id="4937721"/>
<dbReference type="KEGG" id="cnb:CNBH1990"/>
<dbReference type="HOGENOM" id="CLU_012488_1_1_1"/>
<dbReference type="OrthoDB" id="3992at5206"/>
<dbReference type="GO" id="GO:0000145">
    <property type="term" value="C:exocyst"/>
    <property type="evidence" value="ECO:0007669"/>
    <property type="project" value="InterPro"/>
</dbReference>
<dbReference type="GO" id="GO:0030133">
    <property type="term" value="C:transport vesicle"/>
    <property type="evidence" value="ECO:0007669"/>
    <property type="project" value="UniProtKB-SubCell"/>
</dbReference>
<dbReference type="GO" id="GO:0006887">
    <property type="term" value="P:exocytosis"/>
    <property type="evidence" value="ECO:0007669"/>
    <property type="project" value="UniProtKB-KW"/>
</dbReference>
<dbReference type="GO" id="GO:0006893">
    <property type="term" value="P:Golgi to plasma membrane transport"/>
    <property type="evidence" value="ECO:0007669"/>
    <property type="project" value="TreeGrafter"/>
</dbReference>
<dbReference type="GO" id="GO:0015031">
    <property type="term" value="P:protein transport"/>
    <property type="evidence" value="ECO:0007669"/>
    <property type="project" value="UniProtKB-KW"/>
</dbReference>
<dbReference type="CDD" id="cd01226">
    <property type="entry name" value="PH_RalBD_exo84"/>
    <property type="match status" value="1"/>
</dbReference>
<dbReference type="FunFam" id="1.20.58.1220:FF:000006">
    <property type="entry name" value="Exocyst complex component EXO84, variant"/>
    <property type="match status" value="1"/>
</dbReference>
<dbReference type="FunFam" id="2.30.29.30:FF:000264">
    <property type="entry name" value="Potential exocyst complex component Exo84"/>
    <property type="match status" value="1"/>
</dbReference>
<dbReference type="Gene3D" id="1.20.58.1220">
    <property type="entry name" value="Exo84p, C-terminal helical domain"/>
    <property type="match status" value="1"/>
</dbReference>
<dbReference type="Gene3D" id="1.20.58.1210">
    <property type="entry name" value="Exo84p, N-terminal helical domain"/>
    <property type="match status" value="1"/>
</dbReference>
<dbReference type="Gene3D" id="2.30.29.30">
    <property type="entry name" value="Pleckstrin-homology domain (PH domain)/Phosphotyrosine-binding domain (PTB)"/>
    <property type="match status" value="1"/>
</dbReference>
<dbReference type="InterPro" id="IPR016159">
    <property type="entry name" value="Cullin_repeat-like_dom_sf"/>
</dbReference>
<dbReference type="InterPro" id="IPR033961">
    <property type="entry name" value="Exo84"/>
</dbReference>
<dbReference type="InterPro" id="IPR032403">
    <property type="entry name" value="Exo84_C"/>
</dbReference>
<dbReference type="InterPro" id="IPR042561">
    <property type="entry name" value="Exo84_C_1"/>
</dbReference>
<dbReference type="InterPro" id="IPR042560">
    <property type="entry name" value="Exo84_C_2"/>
</dbReference>
<dbReference type="InterPro" id="IPR011993">
    <property type="entry name" value="PH-like_dom_sf"/>
</dbReference>
<dbReference type="PANTHER" id="PTHR21426">
    <property type="entry name" value="EXOCYST COMPLEX COMPONENT 8"/>
    <property type="match status" value="1"/>
</dbReference>
<dbReference type="PANTHER" id="PTHR21426:SF12">
    <property type="entry name" value="EXOCYST COMPLEX COMPONENT 8"/>
    <property type="match status" value="1"/>
</dbReference>
<dbReference type="Pfam" id="PF16528">
    <property type="entry name" value="Exo84_C"/>
    <property type="match status" value="1"/>
</dbReference>
<dbReference type="Pfam" id="PF25345">
    <property type="entry name" value="PH_EXO84"/>
    <property type="match status" value="1"/>
</dbReference>
<dbReference type="Pfam" id="PF08700">
    <property type="entry name" value="VPS51_Exo84_N"/>
    <property type="match status" value="1"/>
</dbReference>
<dbReference type="SUPFAM" id="SSF74788">
    <property type="entry name" value="Cullin repeat-like"/>
    <property type="match status" value="1"/>
</dbReference>
<dbReference type="SUPFAM" id="SSF50729">
    <property type="entry name" value="PH domain-like"/>
    <property type="match status" value="1"/>
</dbReference>